<keyword id="KW-0997">Cell inner membrane</keyword>
<keyword id="KW-1003">Cell membrane</keyword>
<keyword id="KW-0472">Membrane</keyword>
<keyword id="KW-0812">Transmembrane</keyword>
<keyword id="KW-1133">Transmembrane helix</keyword>
<gene>
    <name evidence="1" type="primary">frdC</name>
    <name type="ordered locus">YpsIP31758_3669</name>
</gene>
<sequence length="130" mass="14679">MTTKRKAYVRTMAPNWWQQLGFYRFYMLREGTSIPAVWFSVLLIYGVFALKSGPAGWEGFVSFLQNPLVLFLNILTLFAALLHTKTWFELAPKAVNIIVKSEKMGPEPMIKALWVVTVVASAIILAVALL</sequence>
<feature type="chain" id="PRO_1000062067" description="Fumarate reductase subunit C">
    <location>
        <begin position="1"/>
        <end position="130"/>
    </location>
</feature>
<feature type="transmembrane region" description="Helical" evidence="1">
    <location>
        <begin position="30"/>
        <end position="50"/>
    </location>
</feature>
<feature type="transmembrane region" description="Helical" evidence="1">
    <location>
        <begin position="60"/>
        <end position="80"/>
    </location>
</feature>
<feature type="transmembrane region" description="Helical" evidence="1">
    <location>
        <begin position="110"/>
        <end position="130"/>
    </location>
</feature>
<protein>
    <recommendedName>
        <fullName evidence="1">Fumarate reductase subunit C</fullName>
    </recommendedName>
    <alternativeName>
        <fullName evidence="1">Fumarate reductase 15 kDa hydrophobic protein</fullName>
    </alternativeName>
    <alternativeName>
        <fullName evidence="1">Quinol-fumarate reductase subunit C</fullName>
        <shortName evidence="1">QFR subunit C</shortName>
    </alternativeName>
</protein>
<proteinExistence type="inferred from homology"/>
<dbReference type="EMBL" id="CP000720">
    <property type="protein sequence ID" value="ABS47325.1"/>
    <property type="molecule type" value="Genomic_DNA"/>
</dbReference>
<dbReference type="RefSeq" id="WP_002209135.1">
    <property type="nucleotide sequence ID" value="NC_009708.1"/>
</dbReference>
<dbReference type="SMR" id="A7FMZ5"/>
<dbReference type="GeneID" id="57974250"/>
<dbReference type="KEGG" id="ypi:YpsIP31758_3669"/>
<dbReference type="HOGENOM" id="CLU_156492_0_0_6"/>
<dbReference type="Proteomes" id="UP000002412">
    <property type="component" value="Chromosome"/>
</dbReference>
<dbReference type="GO" id="GO:0045283">
    <property type="term" value="C:fumarate reductase complex"/>
    <property type="evidence" value="ECO:0007669"/>
    <property type="project" value="UniProtKB-UniRule"/>
</dbReference>
<dbReference type="GO" id="GO:0005886">
    <property type="term" value="C:plasma membrane"/>
    <property type="evidence" value="ECO:0007669"/>
    <property type="project" value="UniProtKB-SubCell"/>
</dbReference>
<dbReference type="GO" id="GO:0000104">
    <property type="term" value="F:succinate dehydrogenase activity"/>
    <property type="evidence" value="ECO:0007669"/>
    <property type="project" value="UniProtKB-UniRule"/>
</dbReference>
<dbReference type="CDD" id="cd00546">
    <property type="entry name" value="QFR_TypeD_subunitC"/>
    <property type="match status" value="1"/>
</dbReference>
<dbReference type="Gene3D" id="1.20.1300.10">
    <property type="entry name" value="Fumarate reductase/succinate dehydrogenase, transmembrane subunit"/>
    <property type="match status" value="1"/>
</dbReference>
<dbReference type="HAMAP" id="MF_00708">
    <property type="entry name" value="Fumarate_red_C"/>
    <property type="match status" value="1"/>
</dbReference>
<dbReference type="InterPro" id="IPR003510">
    <property type="entry name" value="Fumarate_red_C"/>
</dbReference>
<dbReference type="InterPro" id="IPR034804">
    <property type="entry name" value="SQR/QFR_C/D"/>
</dbReference>
<dbReference type="NCBIfam" id="NF003445">
    <property type="entry name" value="PRK04987.1"/>
    <property type="match status" value="1"/>
</dbReference>
<dbReference type="Pfam" id="PF02300">
    <property type="entry name" value="Fumarate_red_C"/>
    <property type="match status" value="1"/>
</dbReference>
<dbReference type="PIRSF" id="PIRSF000180">
    <property type="entry name" value="FrdC"/>
    <property type="match status" value="1"/>
</dbReference>
<dbReference type="SUPFAM" id="SSF81343">
    <property type="entry name" value="Fumarate reductase respiratory complex transmembrane subunits"/>
    <property type="match status" value="1"/>
</dbReference>
<reference key="1">
    <citation type="journal article" date="2007" name="PLoS Genet.">
        <title>The complete genome sequence of Yersinia pseudotuberculosis IP31758, the causative agent of Far East scarlet-like fever.</title>
        <authorList>
            <person name="Eppinger M."/>
            <person name="Rosovitz M.J."/>
            <person name="Fricke W.F."/>
            <person name="Rasko D.A."/>
            <person name="Kokorina G."/>
            <person name="Fayolle C."/>
            <person name="Lindler L.E."/>
            <person name="Carniel E."/>
            <person name="Ravel J."/>
        </authorList>
    </citation>
    <scope>NUCLEOTIDE SEQUENCE [LARGE SCALE GENOMIC DNA]</scope>
    <source>
        <strain>IP 31758</strain>
    </source>
</reference>
<comment type="function">
    <text evidence="1">Two distinct, membrane-bound, FAD-containing enzymes are responsible for the catalysis of fumarate and succinate interconversion; fumarate reductase is used in anaerobic growth, and succinate dehydrogenase is used in aerobic growth. Anchors the catalytic components of the fumarate reductase complex to the cell inner membrane, binds quinones.</text>
</comment>
<comment type="subunit">
    <text evidence="1">Part of an enzyme complex containing four subunits: a flavoprotein (FrdA), an iron-sulfur protein (FrdB), and two hydrophobic anchor proteins (FrdC and FrdD).</text>
</comment>
<comment type="subcellular location">
    <subcellularLocation>
        <location evidence="1">Cell inner membrane</location>
        <topology evidence="1">Multi-pass membrane protein</topology>
    </subcellularLocation>
</comment>
<comment type="similarity">
    <text evidence="1">Belongs to the FrdC family.</text>
</comment>
<organism>
    <name type="scientific">Yersinia pseudotuberculosis serotype O:1b (strain IP 31758)</name>
    <dbReference type="NCBI Taxonomy" id="349747"/>
    <lineage>
        <taxon>Bacteria</taxon>
        <taxon>Pseudomonadati</taxon>
        <taxon>Pseudomonadota</taxon>
        <taxon>Gammaproteobacteria</taxon>
        <taxon>Enterobacterales</taxon>
        <taxon>Yersiniaceae</taxon>
        <taxon>Yersinia</taxon>
    </lineage>
</organism>
<evidence type="ECO:0000255" key="1">
    <source>
        <dbReference type="HAMAP-Rule" id="MF_00708"/>
    </source>
</evidence>
<accession>A7FMZ5</accession>
<name>FRDC_YERP3</name>